<dbReference type="EC" id="3.6.4.-" evidence="1"/>
<dbReference type="EMBL" id="X52604">
    <property type="protein sequence ID" value="CAA36837.1"/>
    <property type="molecule type" value="mRNA"/>
</dbReference>
<dbReference type="PIR" id="S11452">
    <property type="entry name" value="S11452"/>
</dbReference>
<dbReference type="SMR" id="P18602"/>
<dbReference type="GO" id="GO:0005737">
    <property type="term" value="C:cytoplasm"/>
    <property type="evidence" value="ECO:0007669"/>
    <property type="project" value="UniProtKB-KW"/>
</dbReference>
<dbReference type="GO" id="GO:0005856">
    <property type="term" value="C:cytoskeleton"/>
    <property type="evidence" value="ECO:0007669"/>
    <property type="project" value="UniProtKB-SubCell"/>
</dbReference>
<dbReference type="GO" id="GO:0005524">
    <property type="term" value="F:ATP binding"/>
    <property type="evidence" value="ECO:0007669"/>
    <property type="project" value="UniProtKB-KW"/>
</dbReference>
<dbReference type="GO" id="GO:0016787">
    <property type="term" value="F:hydrolase activity"/>
    <property type="evidence" value="ECO:0007669"/>
    <property type="project" value="UniProtKB-KW"/>
</dbReference>
<dbReference type="CDD" id="cd10224">
    <property type="entry name" value="ASKHA_NBD_actin"/>
    <property type="match status" value="1"/>
</dbReference>
<dbReference type="FunFam" id="3.30.420.40:FF:000131">
    <property type="entry name" value="Actin, alpha skeletal muscle"/>
    <property type="match status" value="1"/>
</dbReference>
<dbReference type="FunFam" id="3.30.420.40:FF:000148">
    <property type="entry name" value="Actin, alpha skeletal muscle"/>
    <property type="match status" value="1"/>
</dbReference>
<dbReference type="FunFam" id="3.90.640.10:FF:000047">
    <property type="entry name" value="Actin, alpha skeletal muscle"/>
    <property type="match status" value="1"/>
</dbReference>
<dbReference type="FunFam" id="3.30.420.40:FF:000058">
    <property type="entry name" value="Putative actin-related protein 5"/>
    <property type="match status" value="1"/>
</dbReference>
<dbReference type="Gene3D" id="3.30.420.40">
    <property type="match status" value="2"/>
</dbReference>
<dbReference type="Gene3D" id="3.90.640.10">
    <property type="entry name" value="Actin, Chain A, domain 4"/>
    <property type="match status" value="1"/>
</dbReference>
<dbReference type="InterPro" id="IPR004000">
    <property type="entry name" value="Actin"/>
</dbReference>
<dbReference type="InterPro" id="IPR020902">
    <property type="entry name" value="Actin/actin-like_CS"/>
</dbReference>
<dbReference type="InterPro" id="IPR004001">
    <property type="entry name" value="Actin_CS"/>
</dbReference>
<dbReference type="InterPro" id="IPR043129">
    <property type="entry name" value="ATPase_NBD"/>
</dbReference>
<dbReference type="PANTHER" id="PTHR11937">
    <property type="entry name" value="ACTIN"/>
    <property type="match status" value="1"/>
</dbReference>
<dbReference type="Pfam" id="PF00022">
    <property type="entry name" value="Actin"/>
    <property type="match status" value="1"/>
</dbReference>
<dbReference type="PRINTS" id="PR00190">
    <property type="entry name" value="ACTIN"/>
</dbReference>
<dbReference type="SMART" id="SM00268">
    <property type="entry name" value="ACTIN"/>
    <property type="match status" value="1"/>
</dbReference>
<dbReference type="SUPFAM" id="SSF53067">
    <property type="entry name" value="Actin-like ATPase domain"/>
    <property type="match status" value="2"/>
</dbReference>
<dbReference type="PROSITE" id="PS00406">
    <property type="entry name" value="ACTINS_1"/>
    <property type="match status" value="1"/>
</dbReference>
<dbReference type="PROSITE" id="PS00432">
    <property type="entry name" value="ACTINS_2"/>
    <property type="match status" value="1"/>
</dbReference>
<dbReference type="PROSITE" id="PS01132">
    <property type="entry name" value="ACTINS_ACT_LIKE"/>
    <property type="match status" value="1"/>
</dbReference>
<organism>
    <name type="scientific">Artemia sp.</name>
    <name type="common">Brine shrimp</name>
    <dbReference type="NCBI Taxonomy" id="6662"/>
    <lineage>
        <taxon>Eukaryota</taxon>
        <taxon>Metazoa</taxon>
        <taxon>Ecdysozoa</taxon>
        <taxon>Arthropoda</taxon>
        <taxon>Crustacea</taxon>
        <taxon>Branchiopoda</taxon>
        <taxon>Anostraca</taxon>
        <taxon>Artemiidae</taxon>
        <taxon>Artemia</taxon>
    </lineage>
</organism>
<evidence type="ECO:0000250" key="1">
    <source>
        <dbReference type="UniProtKB" id="P68137"/>
    </source>
</evidence>
<evidence type="ECO:0000305" key="2"/>
<sequence length="327" mass="36891">QKDSYVGDEAQSKRGILTLKYPIEHGVVTNWDDMEKIWHHTFYNELRVAPEEHPVLLTEAPLNPKANREKMTQIMFETFNTPAMYVAIQAVLSLYASGRTTGIVLDSGDGVSHTVPIYEGYALPHAILRLDLAGRDLTDYLMKILTERGYTFTTTAEREIVRDIKEKLCYVALDFEQEMATAASSTSLEKSYELPDGQIITIGNERFRCPEALFQPSFLGMETCGIHETAYNSIMKCDVDIRKDLYANTVLSGGTTMFPGIADRMQKEITMLAPSSMKIKIIAPPERKYSVWIGGSILASLSTFQQMWISKQEYDESGPSIVHRKCF</sequence>
<name>ACT3_ARTSX</name>
<reference key="1">
    <citation type="journal article" date="1990" name="Nucleic Acids Res.">
        <title>Molecular cloning and expression of four actin isoforms during Artemia development.</title>
        <authorList>
            <person name="Macias M.-T."/>
            <person name="Sastre L."/>
        </authorList>
    </citation>
    <scope>NUCLEOTIDE SEQUENCE [MRNA]</scope>
</reference>
<comment type="function">
    <text>Actins are highly conserved proteins that are involved in various types of cell motility and are ubiquitously expressed in all eukaryotic cells.</text>
</comment>
<comment type="function">
    <text>Multiple isoforms are involved in various cellular functions such as cytoskeleton structure, cell mobility, chromosome movement and muscle contraction.</text>
</comment>
<comment type="catalytic activity">
    <reaction evidence="1">
        <text>ATP + H2O = ADP + phosphate + H(+)</text>
        <dbReference type="Rhea" id="RHEA:13065"/>
        <dbReference type="ChEBI" id="CHEBI:15377"/>
        <dbReference type="ChEBI" id="CHEBI:15378"/>
        <dbReference type="ChEBI" id="CHEBI:30616"/>
        <dbReference type="ChEBI" id="CHEBI:43474"/>
        <dbReference type="ChEBI" id="CHEBI:456216"/>
    </reaction>
</comment>
<comment type="subcellular location">
    <subcellularLocation>
        <location>Cytoplasm</location>
        <location>Cytoskeleton</location>
    </subcellularLocation>
</comment>
<comment type="miscellaneous">
    <text>There are at least 4 actin isoforms expressed during artemia development.</text>
</comment>
<comment type="similarity">
    <text evidence="2">Belongs to the actin family.</text>
</comment>
<proteinExistence type="evidence at transcript level"/>
<feature type="chain" id="PRO_0000088897" description="Actin, clone 302">
    <location>
        <begin position="1" status="less than"/>
        <end position="327"/>
    </location>
</feature>
<feature type="non-terminal residue">
    <location>
        <position position="1"/>
    </location>
</feature>
<accession>P18602</accession>
<keyword id="KW-0067">ATP-binding</keyword>
<keyword id="KW-0963">Cytoplasm</keyword>
<keyword id="KW-0206">Cytoskeleton</keyword>
<keyword id="KW-0378">Hydrolase</keyword>
<keyword id="KW-0547">Nucleotide-binding</keyword>
<protein>
    <recommendedName>
        <fullName>Actin, clone 302</fullName>
        <ecNumber evidence="1">3.6.4.-</ecNumber>
    </recommendedName>
</protein>